<dbReference type="EC" id="5.4.99.12" evidence="1"/>
<dbReference type="EMBL" id="CP000644">
    <property type="protein sequence ID" value="ABO90560.1"/>
    <property type="molecule type" value="Genomic_DNA"/>
</dbReference>
<dbReference type="RefSeq" id="WP_005310568.1">
    <property type="nucleotide sequence ID" value="NC_009348.1"/>
</dbReference>
<dbReference type="SMR" id="A4SNT8"/>
<dbReference type="STRING" id="29491.GCA_000820065_00741"/>
<dbReference type="KEGG" id="asa:ASA_2531"/>
<dbReference type="eggNOG" id="COG0101">
    <property type="taxonomic scope" value="Bacteria"/>
</dbReference>
<dbReference type="HOGENOM" id="CLU_014673_0_2_6"/>
<dbReference type="Proteomes" id="UP000000225">
    <property type="component" value="Chromosome"/>
</dbReference>
<dbReference type="GO" id="GO:0003723">
    <property type="term" value="F:RNA binding"/>
    <property type="evidence" value="ECO:0007669"/>
    <property type="project" value="InterPro"/>
</dbReference>
<dbReference type="GO" id="GO:0160147">
    <property type="term" value="F:tRNA pseudouridine(38-40) synthase activity"/>
    <property type="evidence" value="ECO:0007669"/>
    <property type="project" value="UniProtKB-EC"/>
</dbReference>
<dbReference type="GO" id="GO:0031119">
    <property type="term" value="P:tRNA pseudouridine synthesis"/>
    <property type="evidence" value="ECO:0007669"/>
    <property type="project" value="UniProtKB-UniRule"/>
</dbReference>
<dbReference type="CDD" id="cd02570">
    <property type="entry name" value="PseudoU_synth_EcTruA"/>
    <property type="match status" value="1"/>
</dbReference>
<dbReference type="FunFam" id="3.30.70.580:FF:000001">
    <property type="entry name" value="tRNA pseudouridine synthase A"/>
    <property type="match status" value="1"/>
</dbReference>
<dbReference type="FunFam" id="3.30.70.660:FF:000001">
    <property type="entry name" value="tRNA pseudouridine synthase A"/>
    <property type="match status" value="1"/>
</dbReference>
<dbReference type="Gene3D" id="3.30.70.660">
    <property type="entry name" value="Pseudouridine synthase I, catalytic domain, C-terminal subdomain"/>
    <property type="match status" value="1"/>
</dbReference>
<dbReference type="Gene3D" id="3.30.70.580">
    <property type="entry name" value="Pseudouridine synthase I, catalytic domain, N-terminal subdomain"/>
    <property type="match status" value="1"/>
</dbReference>
<dbReference type="HAMAP" id="MF_00171">
    <property type="entry name" value="TruA"/>
    <property type="match status" value="1"/>
</dbReference>
<dbReference type="InterPro" id="IPR020103">
    <property type="entry name" value="PsdUridine_synth_cat_dom_sf"/>
</dbReference>
<dbReference type="InterPro" id="IPR001406">
    <property type="entry name" value="PsdUridine_synth_TruA"/>
</dbReference>
<dbReference type="InterPro" id="IPR020097">
    <property type="entry name" value="PsdUridine_synth_TruA_a/b_dom"/>
</dbReference>
<dbReference type="InterPro" id="IPR020095">
    <property type="entry name" value="PsdUridine_synth_TruA_C"/>
</dbReference>
<dbReference type="InterPro" id="IPR020094">
    <property type="entry name" value="TruA/RsuA/RluB/E/F_N"/>
</dbReference>
<dbReference type="NCBIfam" id="TIGR00071">
    <property type="entry name" value="hisT_truA"/>
    <property type="match status" value="1"/>
</dbReference>
<dbReference type="PANTHER" id="PTHR11142">
    <property type="entry name" value="PSEUDOURIDYLATE SYNTHASE"/>
    <property type="match status" value="1"/>
</dbReference>
<dbReference type="PANTHER" id="PTHR11142:SF0">
    <property type="entry name" value="TRNA PSEUDOURIDINE SYNTHASE-LIKE 1"/>
    <property type="match status" value="1"/>
</dbReference>
<dbReference type="Pfam" id="PF01416">
    <property type="entry name" value="PseudoU_synth_1"/>
    <property type="match status" value="2"/>
</dbReference>
<dbReference type="PIRSF" id="PIRSF001430">
    <property type="entry name" value="tRNA_psdUrid_synth"/>
    <property type="match status" value="1"/>
</dbReference>
<dbReference type="SUPFAM" id="SSF55120">
    <property type="entry name" value="Pseudouridine synthase"/>
    <property type="match status" value="1"/>
</dbReference>
<keyword id="KW-0413">Isomerase</keyword>
<keyword id="KW-0819">tRNA processing</keyword>
<gene>
    <name evidence="1" type="primary">truA</name>
    <name type="ordered locus">ASA_2531</name>
</gene>
<sequence>MRIALGIEYDGSRYFGWQRQREVISVQAELEKALSRIANHPVSIQCAGRTDAGVHATGQVIHFDTHAIRSESAWTLGLNSNLPPDIAVRWVKEVDETFHARFSATARRYRYVIYNHNYRPAILGSGVSHYHETIDAALMHLAGQCLLGEQDFTSFRAIGCQSKTPWRNVTHLCVSRQGPYIVLDIRANAFLHHMVRNITGSLLLVGQGLKPVEWIAELLAAKDRNQAGPTAKAGGLYLVDVDYPAELALPQLPLGPLWLPDSAPGTTSF</sequence>
<protein>
    <recommendedName>
        <fullName evidence="1">tRNA pseudouridine synthase A</fullName>
        <ecNumber evidence="1">5.4.99.12</ecNumber>
    </recommendedName>
    <alternativeName>
        <fullName evidence="1">tRNA pseudouridine(38-40) synthase</fullName>
    </alternativeName>
    <alternativeName>
        <fullName evidence="1">tRNA pseudouridylate synthase I</fullName>
    </alternativeName>
    <alternativeName>
        <fullName evidence="1">tRNA-uridine isomerase I</fullName>
    </alternativeName>
</protein>
<proteinExistence type="inferred from homology"/>
<reference key="1">
    <citation type="journal article" date="2008" name="BMC Genomics">
        <title>The genome of Aeromonas salmonicida subsp. salmonicida A449: insights into the evolution of a fish pathogen.</title>
        <authorList>
            <person name="Reith M.E."/>
            <person name="Singh R.K."/>
            <person name="Curtis B."/>
            <person name="Boyd J.M."/>
            <person name="Bouevitch A."/>
            <person name="Kimball J."/>
            <person name="Munholland J."/>
            <person name="Murphy C."/>
            <person name="Sarty D."/>
            <person name="Williams J."/>
            <person name="Nash J.H."/>
            <person name="Johnson S.C."/>
            <person name="Brown L.L."/>
        </authorList>
    </citation>
    <scope>NUCLEOTIDE SEQUENCE [LARGE SCALE GENOMIC DNA]</scope>
    <source>
        <strain>A449</strain>
    </source>
</reference>
<comment type="function">
    <text evidence="1">Formation of pseudouridine at positions 38, 39 and 40 in the anticodon stem and loop of transfer RNAs.</text>
</comment>
<comment type="catalytic activity">
    <reaction evidence="1">
        <text>uridine(38/39/40) in tRNA = pseudouridine(38/39/40) in tRNA</text>
        <dbReference type="Rhea" id="RHEA:22376"/>
        <dbReference type="Rhea" id="RHEA-COMP:10085"/>
        <dbReference type="Rhea" id="RHEA-COMP:10087"/>
        <dbReference type="ChEBI" id="CHEBI:65314"/>
        <dbReference type="ChEBI" id="CHEBI:65315"/>
        <dbReference type="EC" id="5.4.99.12"/>
    </reaction>
</comment>
<comment type="subunit">
    <text evidence="1">Homodimer.</text>
</comment>
<comment type="similarity">
    <text evidence="1">Belongs to the tRNA pseudouridine synthase TruA family.</text>
</comment>
<name>TRUA_AERS4</name>
<feature type="chain" id="PRO_1000017036" description="tRNA pseudouridine synthase A">
    <location>
        <begin position="1"/>
        <end position="269"/>
    </location>
</feature>
<feature type="active site" description="Nucleophile" evidence="1">
    <location>
        <position position="51"/>
    </location>
</feature>
<feature type="binding site" evidence="1">
    <location>
        <position position="109"/>
    </location>
    <ligand>
        <name>substrate</name>
    </ligand>
</feature>
<organism>
    <name type="scientific">Aeromonas salmonicida (strain A449)</name>
    <dbReference type="NCBI Taxonomy" id="382245"/>
    <lineage>
        <taxon>Bacteria</taxon>
        <taxon>Pseudomonadati</taxon>
        <taxon>Pseudomonadota</taxon>
        <taxon>Gammaproteobacteria</taxon>
        <taxon>Aeromonadales</taxon>
        <taxon>Aeromonadaceae</taxon>
        <taxon>Aeromonas</taxon>
    </lineage>
</organism>
<accession>A4SNT8</accession>
<evidence type="ECO:0000255" key="1">
    <source>
        <dbReference type="HAMAP-Rule" id="MF_00171"/>
    </source>
</evidence>